<keyword id="KW-1185">Reference proteome</keyword>
<organism>
    <name type="scientific">Treponema pallidum (strain Nichols)</name>
    <dbReference type="NCBI Taxonomy" id="243276"/>
    <lineage>
        <taxon>Bacteria</taxon>
        <taxon>Pseudomonadati</taxon>
        <taxon>Spirochaetota</taxon>
        <taxon>Spirochaetia</taxon>
        <taxon>Spirochaetales</taxon>
        <taxon>Treponemataceae</taxon>
        <taxon>Treponema</taxon>
    </lineage>
</organism>
<gene>
    <name type="ordered locus">TP_0175</name>
</gene>
<accession>O83205</accession>
<feature type="chain" id="PRO_0000202206" description="Uncharacterized protein TP_0175">
    <location>
        <begin position="1"/>
        <end position="210"/>
    </location>
</feature>
<reference key="1">
    <citation type="journal article" date="1998" name="Science">
        <title>Complete genome sequence of Treponema pallidum, the syphilis spirochete.</title>
        <authorList>
            <person name="Fraser C.M."/>
            <person name="Norris S.J."/>
            <person name="Weinstock G.M."/>
            <person name="White O."/>
            <person name="Sutton G.G."/>
            <person name="Dodson R.J."/>
            <person name="Gwinn M.L."/>
            <person name="Hickey E.K."/>
            <person name="Clayton R.A."/>
            <person name="Ketchum K.A."/>
            <person name="Sodergren E."/>
            <person name="Hardham J.M."/>
            <person name="McLeod M.P."/>
            <person name="Salzberg S.L."/>
            <person name="Peterson J.D."/>
            <person name="Khalak H.G."/>
            <person name="Richardson D.L."/>
            <person name="Howell J.K."/>
            <person name="Chidambaram M."/>
            <person name="Utterback T.R."/>
            <person name="McDonald L.A."/>
            <person name="Artiach P."/>
            <person name="Bowman C."/>
            <person name="Cotton M.D."/>
            <person name="Fujii C."/>
            <person name="Garland S.A."/>
            <person name="Hatch B."/>
            <person name="Horst K."/>
            <person name="Roberts K.M."/>
            <person name="Sandusky M."/>
            <person name="Weidman J.F."/>
            <person name="Smith H.O."/>
            <person name="Venter J.C."/>
        </authorList>
    </citation>
    <scope>NUCLEOTIDE SEQUENCE [LARGE SCALE GENOMIC DNA]</scope>
    <source>
        <strain>Nichols</strain>
    </source>
</reference>
<proteinExistence type="predicted"/>
<sequence>MNLITRVSVHSWSQVDLTHIIVQERVHFLHPLTHGSASQEIAQCYMPIIHGNFFVHYLQPWKAFFPTSEQKIAELTSQAMKIIRADFSVQVHFGKLWMRNALLNLRYAQIFTPKLPNINTQTEAIILGAGPSLEKGIEKIRSHRDVYTIFACDTAFPVCCTGGLMPDFFISIDPQYISYATHYVFIPFTGNCNIRHMRVSMRSTQFLFEW</sequence>
<protein>
    <recommendedName>
        <fullName>Uncharacterized protein TP_0175</fullName>
    </recommendedName>
</protein>
<name>Y175_TREPA</name>
<dbReference type="EMBL" id="AE000520">
    <property type="protein sequence ID" value="AAC65165.1"/>
    <property type="molecule type" value="Genomic_DNA"/>
</dbReference>
<dbReference type="PIR" id="D71358">
    <property type="entry name" value="D71358"/>
</dbReference>
<dbReference type="RefSeq" id="WP_010881622.1">
    <property type="nucleotide sequence ID" value="NC_000919.1"/>
</dbReference>
<dbReference type="IntAct" id="O83205">
    <property type="interactions" value="1"/>
</dbReference>
<dbReference type="STRING" id="243276.TP_0175"/>
<dbReference type="EnsemblBacteria" id="AAC65165">
    <property type="protein sequence ID" value="AAC65165"/>
    <property type="gene ID" value="TP_0175"/>
</dbReference>
<dbReference type="KEGG" id="tpa:TP_0175"/>
<dbReference type="eggNOG" id="COG2604">
    <property type="taxonomic scope" value="Bacteria"/>
</dbReference>
<dbReference type="HOGENOM" id="CLU_1309644_0_0_12"/>
<dbReference type="Proteomes" id="UP000000811">
    <property type="component" value="Chromosome"/>
</dbReference>
<dbReference type="InterPro" id="IPR002826">
    <property type="entry name" value="MptE-like"/>
</dbReference>
<dbReference type="PANTHER" id="PTHR41786:SF1">
    <property type="entry name" value="6-HYDROXYMETHYLPTERIN DIPHOSPHOKINASE MPTE-LIKE DOMAIN-CONTAINING PROTEIN"/>
    <property type="match status" value="1"/>
</dbReference>
<dbReference type="PANTHER" id="PTHR41786">
    <property type="entry name" value="MOTILITY ACCESSORY FACTOR MAF"/>
    <property type="match status" value="1"/>
</dbReference>
<dbReference type="Pfam" id="PF01973">
    <property type="entry name" value="MptE-like"/>
    <property type="match status" value="1"/>
</dbReference>